<accession>Q61184</accession>
<proteinExistence type="evidence at transcript level"/>
<comment type="function">
    <text evidence="1 4">High affinity receptor for melatonin. Likely to mediate the reproductive and circadian actions of melatonin. The activity of this receptor is mediated by pertussis toxin sensitive G proteins that inhibit adenylate cyclase activity (By similarity). Possibly involved in sleep induction, by melatonin activation of the potassium channel KCNMA1/BK and the dissociation of G-beta and G-gamma subunits, thereby decreasing synaptic transmission (PubMed:32958651).</text>
</comment>
<comment type="subcellular location">
    <subcellularLocation>
        <location>Cell membrane</location>
        <topology>Multi-pass membrane protein</topology>
    </subcellularLocation>
</comment>
<comment type="similarity">
    <text evidence="3">Belongs to the G-protein coupled receptor 1 family.</text>
</comment>
<dbReference type="EMBL" id="U52222">
    <property type="protein sequence ID" value="AAB08755.1"/>
    <property type="molecule type" value="mRNA"/>
</dbReference>
<dbReference type="CCDS" id="CCDS22273.1"/>
<dbReference type="RefSeq" id="NP_032665.1">
    <property type="nucleotide sequence ID" value="NM_008639.3"/>
</dbReference>
<dbReference type="SMR" id="Q61184"/>
<dbReference type="FunCoup" id="Q61184">
    <property type="interactions" value="533"/>
</dbReference>
<dbReference type="STRING" id="10090.ENSMUSP00000069872"/>
<dbReference type="GlyCosmos" id="Q61184">
    <property type="glycosylation" value="2 sites, No reported glycans"/>
</dbReference>
<dbReference type="GlyGen" id="Q61184">
    <property type="glycosylation" value="2 sites"/>
</dbReference>
<dbReference type="iPTMnet" id="Q61184"/>
<dbReference type="PaxDb" id="10090-ENSMUSP00000069872"/>
<dbReference type="Antibodypedia" id="29126">
    <property type="antibodies" value="343 antibodies from 32 providers"/>
</dbReference>
<dbReference type="DNASU" id="17773"/>
<dbReference type="Ensembl" id="ENSMUST00000067984.9">
    <property type="protein sequence ID" value="ENSMUSP00000069872.8"/>
    <property type="gene ID" value="ENSMUSG00000054764.10"/>
</dbReference>
<dbReference type="GeneID" id="17773"/>
<dbReference type="KEGG" id="mmu:17773"/>
<dbReference type="UCSC" id="uc009loq.1">
    <property type="organism name" value="mouse"/>
</dbReference>
<dbReference type="AGR" id="MGI:102967"/>
<dbReference type="CTD" id="4543"/>
<dbReference type="MGI" id="MGI:102967">
    <property type="gene designation" value="Mtnr1a"/>
</dbReference>
<dbReference type="VEuPathDB" id="HostDB:ENSMUSG00000054764"/>
<dbReference type="eggNOG" id="KOG3656">
    <property type="taxonomic scope" value="Eukaryota"/>
</dbReference>
<dbReference type="GeneTree" id="ENSGT00940000160321"/>
<dbReference type="HOGENOM" id="CLU_009579_3_3_1"/>
<dbReference type="InParanoid" id="Q61184"/>
<dbReference type="OMA" id="HCQISAF"/>
<dbReference type="OrthoDB" id="10044919at2759"/>
<dbReference type="PhylomeDB" id="Q61184"/>
<dbReference type="TreeFam" id="TF331693"/>
<dbReference type="Reactome" id="R-MMU-373076">
    <property type="pathway name" value="Class A/1 (Rhodopsin-like receptors)"/>
</dbReference>
<dbReference type="Reactome" id="R-MMU-418594">
    <property type="pathway name" value="G alpha (i) signalling events"/>
</dbReference>
<dbReference type="BioGRID-ORCS" id="17773">
    <property type="hits" value="3 hits in 77 CRISPR screens"/>
</dbReference>
<dbReference type="ChiTaRS" id="Mtnr1a">
    <property type="organism name" value="mouse"/>
</dbReference>
<dbReference type="PRO" id="PR:Q61184"/>
<dbReference type="Proteomes" id="UP000000589">
    <property type="component" value="Chromosome 8"/>
</dbReference>
<dbReference type="RNAct" id="Q61184">
    <property type="molecule type" value="protein"/>
</dbReference>
<dbReference type="Bgee" id="ENSMUSG00000054764">
    <property type="expression patterns" value="Expressed in lens of camera-type eye and 27 other cell types or tissues"/>
</dbReference>
<dbReference type="ExpressionAtlas" id="Q61184">
    <property type="expression patterns" value="baseline and differential"/>
</dbReference>
<dbReference type="GO" id="GO:0005886">
    <property type="term" value="C:plasma membrane"/>
    <property type="evidence" value="ECO:0007669"/>
    <property type="project" value="UniProtKB-SubCell"/>
</dbReference>
<dbReference type="GO" id="GO:0043235">
    <property type="term" value="C:receptor complex"/>
    <property type="evidence" value="ECO:0007669"/>
    <property type="project" value="Ensembl"/>
</dbReference>
<dbReference type="GO" id="GO:0042562">
    <property type="term" value="F:hormone binding"/>
    <property type="evidence" value="ECO:0007669"/>
    <property type="project" value="Ensembl"/>
</dbReference>
<dbReference type="GO" id="GO:0008502">
    <property type="term" value="F:melatonin receptor activity"/>
    <property type="evidence" value="ECO:0000304"/>
    <property type="project" value="MGI"/>
</dbReference>
<dbReference type="GO" id="GO:0007193">
    <property type="term" value="P:adenylate cyclase-inhibiting G protein-coupled receptor signaling pathway"/>
    <property type="evidence" value="ECO:0007669"/>
    <property type="project" value="Ensembl"/>
</dbReference>
<dbReference type="GO" id="GO:0007623">
    <property type="term" value="P:circadian rhythm"/>
    <property type="evidence" value="ECO:0000304"/>
    <property type="project" value="MGI"/>
</dbReference>
<dbReference type="FunFam" id="1.20.1070.10:FF:000056">
    <property type="entry name" value="Melatonin receptor type 1A"/>
    <property type="match status" value="1"/>
</dbReference>
<dbReference type="Gene3D" id="1.20.1070.10">
    <property type="entry name" value="Rhodopsin 7-helix transmembrane proteins"/>
    <property type="match status" value="1"/>
</dbReference>
<dbReference type="InterPro" id="IPR000276">
    <property type="entry name" value="GPCR_Rhodpsn"/>
</dbReference>
<dbReference type="InterPro" id="IPR017452">
    <property type="entry name" value="GPCR_Rhodpsn_7TM"/>
</dbReference>
<dbReference type="InterPro" id="IPR002278">
    <property type="entry name" value="Mel_1A/1B_rcpt"/>
</dbReference>
<dbReference type="InterPro" id="IPR000025">
    <property type="entry name" value="Melatonin_rcpt"/>
</dbReference>
<dbReference type="PANTHER" id="PTHR24228">
    <property type="entry name" value="B2 BRADYKININ RECEPTOR/ANGIOTENSIN II RECEPTOR"/>
    <property type="match status" value="1"/>
</dbReference>
<dbReference type="PANTHER" id="PTHR24228:SF53">
    <property type="entry name" value="MELATONIN RECEPTOR TYPE 1A"/>
    <property type="match status" value="1"/>
</dbReference>
<dbReference type="Pfam" id="PF00001">
    <property type="entry name" value="7tm_1"/>
    <property type="match status" value="1"/>
</dbReference>
<dbReference type="PRINTS" id="PR00237">
    <property type="entry name" value="GPCRRHODOPSN"/>
</dbReference>
<dbReference type="PRINTS" id="PR01149">
    <property type="entry name" value="MELATONIN1AR"/>
</dbReference>
<dbReference type="PRINTS" id="PR00857">
    <property type="entry name" value="MELATONINR"/>
</dbReference>
<dbReference type="SMART" id="SM01381">
    <property type="entry name" value="7TM_GPCR_Srsx"/>
    <property type="match status" value="1"/>
</dbReference>
<dbReference type="SUPFAM" id="SSF81321">
    <property type="entry name" value="Family A G protein-coupled receptor-like"/>
    <property type="match status" value="1"/>
</dbReference>
<dbReference type="PROSITE" id="PS00237">
    <property type="entry name" value="G_PROTEIN_RECEP_F1_1"/>
    <property type="match status" value="1"/>
</dbReference>
<dbReference type="PROSITE" id="PS50262">
    <property type="entry name" value="G_PROTEIN_RECEP_F1_2"/>
    <property type="match status" value="1"/>
</dbReference>
<name>MTR1A_MOUSE</name>
<keyword id="KW-1003">Cell membrane</keyword>
<keyword id="KW-1015">Disulfide bond</keyword>
<keyword id="KW-0297">G-protein coupled receptor</keyword>
<keyword id="KW-0325">Glycoprotein</keyword>
<keyword id="KW-0472">Membrane</keyword>
<keyword id="KW-0675">Receptor</keyword>
<keyword id="KW-1185">Reference proteome</keyword>
<keyword id="KW-0807">Transducer</keyword>
<keyword id="KW-0812">Transmembrane</keyword>
<keyword id="KW-1133">Transmembrane helix</keyword>
<organism>
    <name type="scientific">Mus musculus</name>
    <name type="common">Mouse</name>
    <dbReference type="NCBI Taxonomy" id="10090"/>
    <lineage>
        <taxon>Eukaryota</taxon>
        <taxon>Metazoa</taxon>
        <taxon>Chordata</taxon>
        <taxon>Craniata</taxon>
        <taxon>Vertebrata</taxon>
        <taxon>Euteleostomi</taxon>
        <taxon>Mammalia</taxon>
        <taxon>Eutheria</taxon>
        <taxon>Euarchontoglires</taxon>
        <taxon>Glires</taxon>
        <taxon>Rodentia</taxon>
        <taxon>Myomorpha</taxon>
        <taxon>Muroidea</taxon>
        <taxon>Muridae</taxon>
        <taxon>Murinae</taxon>
        <taxon>Mus</taxon>
        <taxon>Mus</taxon>
    </lineage>
</organism>
<feature type="chain" id="PRO_0000069863" description="Melatonin receptor type 1A">
    <location>
        <begin position="1"/>
        <end position="353"/>
    </location>
</feature>
<feature type="topological domain" description="Extracellular" evidence="2">
    <location>
        <begin position="1"/>
        <end position="32"/>
    </location>
</feature>
<feature type="transmembrane region" description="Helical; Name=1" evidence="2">
    <location>
        <begin position="33"/>
        <end position="53"/>
    </location>
</feature>
<feature type="topological domain" description="Cytoplasmic" evidence="2">
    <location>
        <begin position="54"/>
        <end position="66"/>
    </location>
</feature>
<feature type="transmembrane region" description="Helical; Name=2" evidence="2">
    <location>
        <begin position="67"/>
        <end position="87"/>
    </location>
</feature>
<feature type="topological domain" description="Extracellular" evidence="2">
    <location>
        <begin position="88"/>
        <end position="105"/>
    </location>
</feature>
<feature type="transmembrane region" description="Helical; Name=3" evidence="2">
    <location>
        <begin position="106"/>
        <end position="126"/>
    </location>
</feature>
<feature type="topological domain" description="Cytoplasmic" evidence="2">
    <location>
        <begin position="127"/>
        <end position="145"/>
    </location>
</feature>
<feature type="transmembrane region" description="Helical; Name=4" evidence="2">
    <location>
        <begin position="146"/>
        <end position="166"/>
    </location>
</feature>
<feature type="topological domain" description="Extracellular" evidence="2">
    <location>
        <begin position="167"/>
        <end position="190"/>
    </location>
</feature>
<feature type="transmembrane region" description="Helical; Name=5" evidence="2">
    <location>
        <begin position="191"/>
        <end position="211"/>
    </location>
</feature>
<feature type="topological domain" description="Cytoplasmic" evidence="2">
    <location>
        <begin position="212"/>
        <end position="243"/>
    </location>
</feature>
<feature type="transmembrane region" description="Helical; Name=6" evidence="2">
    <location>
        <begin position="244"/>
        <end position="264"/>
    </location>
</feature>
<feature type="topological domain" description="Extracellular" evidence="2">
    <location>
        <begin position="265"/>
        <end position="277"/>
    </location>
</feature>
<feature type="transmembrane region" description="Helical; Name=7" evidence="2">
    <location>
        <begin position="278"/>
        <end position="298"/>
    </location>
</feature>
<feature type="topological domain" description="Cytoplasmic" evidence="2">
    <location>
        <begin position="299"/>
        <end position="353"/>
    </location>
</feature>
<feature type="glycosylation site" description="N-linked (GlcNAc...) asparagine" evidence="2">
    <location>
        <position position="4"/>
    </location>
</feature>
<feature type="glycosylation site" description="N-linked (GlcNAc...) asparagine" evidence="2">
    <location>
        <position position="10"/>
    </location>
</feature>
<feature type="disulfide bond" evidence="3">
    <location>
        <begin position="103"/>
        <end position="180"/>
    </location>
</feature>
<evidence type="ECO:0000250" key="1"/>
<evidence type="ECO:0000255" key="2"/>
<evidence type="ECO:0000255" key="3">
    <source>
        <dbReference type="PROSITE-ProRule" id="PRU00521"/>
    </source>
</evidence>
<evidence type="ECO:0000269" key="4">
    <source>
    </source>
</evidence>
<evidence type="ECO:0000305" key="5"/>
<protein>
    <recommendedName>
        <fullName>Melatonin receptor type 1A</fullName>
        <shortName>Mel-1A-R</shortName>
        <shortName>Mel1a receptor</shortName>
    </recommendedName>
</protein>
<reference key="1">
    <citation type="journal article" date="1996" name="Endocrinology">
        <title>Structure, characterization, and expression of the gene encoding the mouse Mel1a melatonin receptor.</title>
        <authorList>
            <person name="Roca A.L."/>
            <person name="Godson C."/>
            <person name="Weaver D.R."/>
            <person name="Reppert S.M."/>
        </authorList>
    </citation>
    <scope>NUCLEOTIDE SEQUENCE [MRNA]</scope>
    <source>
        <strain>BALB/cJ</strain>
    </source>
</reference>
<reference evidence="5" key="2">
    <citation type="journal article" date="2020" name="Proc. Natl. Acad. Sci. U.S.A.">
        <title>Melatonin promotes sleep by activating the BK channel in C. elegans.</title>
        <authorList>
            <person name="Niu L."/>
            <person name="Li Y."/>
            <person name="Zong P."/>
            <person name="Liu P."/>
            <person name="Shui Y."/>
            <person name="Chen B."/>
            <person name="Wang Z.W."/>
        </authorList>
    </citation>
    <scope>FUNCTION</scope>
</reference>
<gene>
    <name type="primary">Mtnr1a</name>
</gene>
<sequence length="353" mass="39837">MKGNVSELLNATQQAPGGGEGGRPRPSWLASTLAFILIFTIVVDILGNLLVILSVYRNKKLRNSGNIFVVSLAVADLVVAVYPYPLVLTSILNNGWNLGYLHCQVSAFLMGLSVIGSIFNITGIAMNRYCYICHSLKYDKIYSNKNSLCYVFLIWMLTLIAIMPNLQTGTLQYDPRIYSCTFTQSVSSAYTIAVVVFHFIVPMIIVIFCYLRIWVLVLQVRRRVKPDNKPKLKPQDFRNFVTMFVVFVLFAICWAPLNLIGLIVASDPATMVPRIPEWLFVASYYLAYFNSCLNAIIYGLLNQNFRKEYKKIIVSLCTAKMFFVESSNEEADKIKCKPSPLIPNNNLIKVDSV</sequence>